<gene>
    <name evidence="5" type="primary">Stl-P450</name>
</gene>
<dbReference type="EC" id="1.-.-.-" evidence="4"/>
<dbReference type="EMBL" id="LC073704">
    <property type="protein sequence ID" value="BAT32890.1"/>
    <property type="molecule type" value="Genomic_DNA"/>
</dbReference>
<dbReference type="SMR" id="A0A0P0ZEA9"/>
<dbReference type="GlyCosmos" id="A0A0P0ZEA9">
    <property type="glycosylation" value="3 sites, No reported glycans"/>
</dbReference>
<dbReference type="UniPathway" id="UPA00213"/>
<dbReference type="GO" id="GO:0016020">
    <property type="term" value="C:membrane"/>
    <property type="evidence" value="ECO:0007669"/>
    <property type="project" value="UniProtKB-SubCell"/>
</dbReference>
<dbReference type="GO" id="GO:0020037">
    <property type="term" value="F:heme binding"/>
    <property type="evidence" value="ECO:0007669"/>
    <property type="project" value="InterPro"/>
</dbReference>
<dbReference type="GO" id="GO:0005506">
    <property type="term" value="F:iron ion binding"/>
    <property type="evidence" value="ECO:0007669"/>
    <property type="project" value="InterPro"/>
</dbReference>
<dbReference type="GO" id="GO:0004497">
    <property type="term" value="F:monooxygenase activity"/>
    <property type="evidence" value="ECO:0007669"/>
    <property type="project" value="UniProtKB-KW"/>
</dbReference>
<dbReference type="GO" id="GO:0016705">
    <property type="term" value="F:oxidoreductase activity, acting on paired donors, with incorporation or reduction of molecular oxygen"/>
    <property type="evidence" value="ECO:0007669"/>
    <property type="project" value="InterPro"/>
</dbReference>
<dbReference type="GO" id="GO:0044550">
    <property type="term" value="P:secondary metabolite biosynthetic process"/>
    <property type="evidence" value="ECO:0007669"/>
    <property type="project" value="UniProtKB-ARBA"/>
</dbReference>
<dbReference type="GO" id="GO:0016114">
    <property type="term" value="P:terpenoid biosynthetic process"/>
    <property type="evidence" value="ECO:0007669"/>
    <property type="project" value="UniProtKB-UniPathway"/>
</dbReference>
<dbReference type="CDD" id="cd11062">
    <property type="entry name" value="CYP58-like"/>
    <property type="match status" value="1"/>
</dbReference>
<dbReference type="Gene3D" id="1.10.630.10">
    <property type="entry name" value="Cytochrome P450"/>
    <property type="match status" value="1"/>
</dbReference>
<dbReference type="InterPro" id="IPR001128">
    <property type="entry name" value="Cyt_P450"/>
</dbReference>
<dbReference type="InterPro" id="IPR002401">
    <property type="entry name" value="Cyt_P450_E_grp-I"/>
</dbReference>
<dbReference type="InterPro" id="IPR036396">
    <property type="entry name" value="Cyt_P450_sf"/>
</dbReference>
<dbReference type="InterPro" id="IPR050121">
    <property type="entry name" value="Cytochrome_P450_monoxygenase"/>
</dbReference>
<dbReference type="PANTHER" id="PTHR24305">
    <property type="entry name" value="CYTOCHROME P450"/>
    <property type="match status" value="1"/>
</dbReference>
<dbReference type="PANTHER" id="PTHR24305:SF157">
    <property type="entry name" value="N-ACETYLTRYPTOPHAN 6-HYDROXYLASE IVOC-RELATED"/>
    <property type="match status" value="1"/>
</dbReference>
<dbReference type="Pfam" id="PF00067">
    <property type="entry name" value="p450"/>
    <property type="match status" value="2"/>
</dbReference>
<dbReference type="PRINTS" id="PR00463">
    <property type="entry name" value="EP450I"/>
</dbReference>
<dbReference type="SUPFAM" id="SSF48264">
    <property type="entry name" value="Cytochrome P450"/>
    <property type="match status" value="1"/>
</dbReference>
<protein>
    <recommendedName>
        <fullName evidence="5">Stellatic acid synthase</fullName>
        <ecNumber evidence="4">1.-.-.-</ecNumber>
    </recommendedName>
    <alternativeName>
        <fullName evidence="5">Cytochrome P450 monooxygenase Stl-P450</fullName>
    </alternativeName>
    <alternativeName>
        <fullName evidence="5">Stellatic acid biosynthetis gene clusters protein Stl-P450</fullName>
    </alternativeName>
</protein>
<feature type="chain" id="PRO_0000452515" description="Stellatic acid synthase">
    <location>
        <begin position="1"/>
        <end position="522"/>
    </location>
</feature>
<feature type="transmembrane region" description="Helical" evidence="2">
    <location>
        <begin position="23"/>
        <end position="43"/>
    </location>
</feature>
<feature type="binding site" description="axial binding residue" evidence="1">
    <location>
        <position position="464"/>
    </location>
    <ligand>
        <name>heme</name>
        <dbReference type="ChEBI" id="CHEBI:30413"/>
    </ligand>
    <ligandPart>
        <name>Fe</name>
        <dbReference type="ChEBI" id="CHEBI:18248"/>
    </ligandPart>
</feature>
<feature type="glycosylation site" description="N-linked (GlcNAc...) asparagine" evidence="3">
    <location>
        <position position="267"/>
    </location>
</feature>
<feature type="glycosylation site" description="N-linked (GlcNAc...) asparagine" evidence="3">
    <location>
        <position position="451"/>
    </location>
</feature>
<feature type="glycosylation site" description="N-linked (GlcNAc...) asparagine" evidence="3">
    <location>
        <position position="495"/>
    </location>
</feature>
<comment type="function">
    <text evidence="4">Cytochrome P450 monooxygenase; part of the gene cluster that mediates the biosynthesis of the sesterterpene stellatic acid (PubMed:26351860). The first step in the pathway is performed by the stellatatriene synthase that possesses both prenyl transferase and terpene cyclase activity, converting isopentenyl diphosphate and dimethylallyl diphosphate into geranylgeranyl diphosphate (GGDP) and then converting GGDP into stellata-2,6,19-triene (PubMed:26351860). The cytochrome P450 monooxygenase Stl-P450 then catalyzes three successive oxidation reactions on the C-20 methyl group to generate the carboxylic acid of stellatic acid (PubMed:26351860).</text>
</comment>
<comment type="catalytic activity">
    <reaction evidence="4">
        <text>stellata-2,6,19-triene + 3 reduced [NADPH--hemoprotein reductase] + 3 O2 = stellatate + 3 oxidized [NADPH--hemoprotein reductase] + 4 H2O + 4 H(+)</text>
        <dbReference type="Rhea" id="RHEA:66712"/>
        <dbReference type="Rhea" id="RHEA-COMP:11964"/>
        <dbReference type="Rhea" id="RHEA-COMP:11965"/>
        <dbReference type="ChEBI" id="CHEBI:15377"/>
        <dbReference type="ChEBI" id="CHEBI:15378"/>
        <dbReference type="ChEBI" id="CHEBI:15379"/>
        <dbReference type="ChEBI" id="CHEBI:57618"/>
        <dbReference type="ChEBI" id="CHEBI:58210"/>
        <dbReference type="ChEBI" id="CHEBI:138048"/>
        <dbReference type="ChEBI" id="CHEBI:167454"/>
    </reaction>
    <physiologicalReaction direction="left-to-right" evidence="4">
        <dbReference type="Rhea" id="RHEA:66713"/>
    </physiologicalReaction>
</comment>
<comment type="cofactor">
    <cofactor evidence="1">
        <name>heme</name>
        <dbReference type="ChEBI" id="CHEBI:30413"/>
    </cofactor>
</comment>
<comment type="pathway">
    <text evidence="4">Secondary metabolite biosynthesis; terpenoid biosynthesis.</text>
</comment>
<comment type="subcellular location">
    <subcellularLocation>
        <location evidence="2">Membrane</location>
        <topology evidence="2">Single-pass membrane protein</topology>
    </subcellularLocation>
</comment>
<comment type="similarity">
    <text evidence="6">Belongs to the cytochrome P450 family.</text>
</comment>
<organism>
    <name type="scientific">Emericella variicolor</name>
    <name type="common">Aspergillus stellatus</name>
    <dbReference type="NCBI Taxonomy" id="1549217"/>
    <lineage>
        <taxon>Eukaryota</taxon>
        <taxon>Fungi</taxon>
        <taxon>Dikarya</taxon>
        <taxon>Ascomycota</taxon>
        <taxon>Pezizomycotina</taxon>
        <taxon>Eurotiomycetes</taxon>
        <taxon>Eurotiomycetidae</taxon>
        <taxon>Eurotiales</taxon>
        <taxon>Aspergillaceae</taxon>
        <taxon>Aspergillus</taxon>
        <taxon>Aspergillus subgen. Nidulantes</taxon>
    </lineage>
</organism>
<evidence type="ECO:0000250" key="1">
    <source>
        <dbReference type="UniProtKB" id="P04798"/>
    </source>
</evidence>
<evidence type="ECO:0000255" key="2"/>
<evidence type="ECO:0000255" key="3">
    <source>
        <dbReference type="PROSITE-ProRule" id="PRU00498"/>
    </source>
</evidence>
<evidence type="ECO:0000269" key="4">
    <source>
    </source>
</evidence>
<evidence type="ECO:0000303" key="5">
    <source>
    </source>
</evidence>
<evidence type="ECO:0000305" key="6"/>
<reference key="1">
    <citation type="journal article" date="2015" name="Org. Lett.">
        <title>Molecular basis for stellatic acid biosynthesis: a genome mining approach for discovery of sesterterpene synthases.</title>
        <authorList>
            <person name="Matsuda Y."/>
            <person name="Mitsuhashi T."/>
            <person name="Quan Z."/>
            <person name="Abe I."/>
        </authorList>
    </citation>
    <scope>NUCLEOTIDE SEQUENCE [GENOMIC DNA]</scope>
    <scope>FUNCTION</scope>
    <scope>CATALYTIC ACTIVITY</scope>
    <scope>PATHWAY</scope>
    <source>
        <strain>ATCC 12069 / CBS 136.55 / IMI 60316 / NBRC 32302</strain>
    </source>
</reference>
<keyword id="KW-0325">Glycoprotein</keyword>
<keyword id="KW-0349">Heme</keyword>
<keyword id="KW-0408">Iron</keyword>
<keyword id="KW-0472">Membrane</keyword>
<keyword id="KW-0479">Metal-binding</keyword>
<keyword id="KW-0503">Monooxygenase</keyword>
<keyword id="KW-0560">Oxidoreductase</keyword>
<keyword id="KW-0812">Transmembrane</keyword>
<keyword id="KW-1133">Transmembrane helix</keyword>
<sequence length="522" mass="59873">MEGSINDARRTNYLVLLRTCYEIYGIYEPLLALFAVYSVAVVVYRLYLHPLARFPGPKLAAATGWYEFYHDVFRGGQYLYEIESMHRKYGPIIRINPHELVVNDPDFYNTVFVAANTRRTDKWSGLEGIGLRGSLAFTRDHDLHRIRRKRYEPFFSRLSVSRIEPIIVDEAKLLAKQLEASSKTGRVIELEHVMSAFTGDVITTLCSEKSPDMIRHPEFGKGWHTSLYNFPSCFRAGAFNSFLEYSTDHINTAKREMLSVDKLEQNNKSSVFRYVLSTDMPQAERDTERLAREAALLFGAGSVTTTRFFSVTIYYTLRNRQIRDRLSAELKDVMAGYPSTLPTWQELDRLPYLHAIVKEGLRYACPFVLSSSLAAWSSLSHKFSSRLSYGVMRHLSRISPDSALHYKQWTIPPGTPVGMSSYSLHTDPETFPEPFKFMPERWLGEYNPKMNRSWVPFTRGSRNCLGMNLAYAQIYWGLAVMFRPGGPRLELYETNESDIRPVLDFLGPLPKSGSRGLRVTVS</sequence>
<proteinExistence type="evidence at protein level"/>
<name>STLP4_EMEVA</name>
<accession>A0A0P0ZEA9</accession>